<comment type="function">
    <text evidence="1">Catalyzes the specific phosphorylation of 1,6-anhydro-N-acetylmuramic acid (anhMurNAc) with the simultaneous cleavage of the 1,6-anhydro ring, generating MurNAc-6-P. Is required for the utilization of anhMurNAc either imported from the medium or derived from its own cell wall murein, and thus plays a role in cell wall recycling.</text>
</comment>
<comment type="catalytic activity">
    <reaction evidence="1">
        <text>1,6-anhydro-N-acetyl-beta-muramate + ATP + H2O = N-acetyl-D-muramate 6-phosphate + ADP + H(+)</text>
        <dbReference type="Rhea" id="RHEA:24952"/>
        <dbReference type="ChEBI" id="CHEBI:15377"/>
        <dbReference type="ChEBI" id="CHEBI:15378"/>
        <dbReference type="ChEBI" id="CHEBI:30616"/>
        <dbReference type="ChEBI" id="CHEBI:58690"/>
        <dbReference type="ChEBI" id="CHEBI:58722"/>
        <dbReference type="ChEBI" id="CHEBI:456216"/>
        <dbReference type="EC" id="2.7.1.170"/>
    </reaction>
</comment>
<comment type="pathway">
    <text evidence="1">Amino-sugar metabolism; 1,6-anhydro-N-acetylmuramate degradation.</text>
</comment>
<comment type="pathway">
    <text evidence="1">Cell wall biogenesis; peptidoglycan recycling.</text>
</comment>
<comment type="similarity">
    <text evidence="1">Belongs to the anhydro-N-acetylmuramic acid kinase family.</text>
</comment>
<comment type="sequence caution" evidence="3">
    <conflict type="erroneous initiation">
        <sequence resource="EMBL-CDS" id="ABD54710"/>
    </conflict>
</comment>
<sequence length="375" mass="38361">MAGKEKAVWPPVWAAGAMSGTSFDGVDVALLLTDGVRIEAFGDAREVAYSDADRAILREAMGAWPGEARAEVAAQVVEAAHITAMVDLPDVALLGFHGQTLAHDPEARRTHQVGDGAVLANALGVEVIWDFRSADMGLGGQGAPLAPFYHWACARWIGAQGPVAILNLGGVGNITWVDPSIEGPELPGACLAFDTGPANAPIDDLMVRRGLGACDVGGALAARGEIDLKILEEALEAPWFDLAPPKSLDRDAFSGLADAVSGLSDADASATLTAVSAGAVARGLAHLSSRPRQVLVAGGGRKNATLMAMVQDALGCDVRAVEDVGLNGDALEAQAFAYLAVRVARGLPTSAPSTTGVAAPVGGGRRSKPGARELS</sequence>
<name>ANMK1_JANSC</name>
<gene>
    <name evidence="1" type="primary">anmK1</name>
    <name type="ordered locus">Jann_1793</name>
</gene>
<feature type="chain" id="PRO_0000250006" description="Anhydro-N-acetylmuramic acid kinase 1">
    <location>
        <begin position="1"/>
        <end position="375"/>
    </location>
</feature>
<feature type="region of interest" description="Disordered" evidence="2">
    <location>
        <begin position="351"/>
        <end position="375"/>
    </location>
</feature>
<feature type="binding site" evidence="1">
    <location>
        <begin position="20"/>
        <end position="27"/>
    </location>
    <ligand>
        <name>ATP</name>
        <dbReference type="ChEBI" id="CHEBI:30616"/>
    </ligand>
</feature>
<organism>
    <name type="scientific">Jannaschia sp. (strain CCS1)</name>
    <dbReference type="NCBI Taxonomy" id="290400"/>
    <lineage>
        <taxon>Bacteria</taxon>
        <taxon>Pseudomonadati</taxon>
        <taxon>Pseudomonadota</taxon>
        <taxon>Alphaproteobacteria</taxon>
        <taxon>Rhodobacterales</taxon>
        <taxon>Roseobacteraceae</taxon>
        <taxon>Jannaschia</taxon>
    </lineage>
</organism>
<dbReference type="EC" id="2.7.1.170" evidence="1"/>
<dbReference type="EMBL" id="CP000264">
    <property type="protein sequence ID" value="ABD54710.1"/>
    <property type="status" value="ALT_INIT"/>
    <property type="molecule type" value="Genomic_DNA"/>
</dbReference>
<dbReference type="RefSeq" id="WP_044006588.1">
    <property type="nucleotide sequence ID" value="NC_007802.1"/>
</dbReference>
<dbReference type="SMR" id="Q28RF2"/>
<dbReference type="STRING" id="290400.Jann_1793"/>
<dbReference type="KEGG" id="jan:Jann_1793"/>
<dbReference type="eggNOG" id="COG2377">
    <property type="taxonomic scope" value="Bacteria"/>
</dbReference>
<dbReference type="HOGENOM" id="CLU_038782_3_0_5"/>
<dbReference type="OrthoDB" id="9763949at2"/>
<dbReference type="UniPathway" id="UPA00343"/>
<dbReference type="UniPathway" id="UPA00544"/>
<dbReference type="Proteomes" id="UP000008326">
    <property type="component" value="Chromosome"/>
</dbReference>
<dbReference type="GO" id="GO:0005524">
    <property type="term" value="F:ATP binding"/>
    <property type="evidence" value="ECO:0007669"/>
    <property type="project" value="UniProtKB-UniRule"/>
</dbReference>
<dbReference type="GO" id="GO:0016301">
    <property type="term" value="F:kinase activity"/>
    <property type="evidence" value="ECO:0007669"/>
    <property type="project" value="UniProtKB-KW"/>
</dbReference>
<dbReference type="GO" id="GO:0016773">
    <property type="term" value="F:phosphotransferase activity, alcohol group as acceptor"/>
    <property type="evidence" value="ECO:0007669"/>
    <property type="project" value="UniProtKB-UniRule"/>
</dbReference>
<dbReference type="GO" id="GO:0097175">
    <property type="term" value="P:1,6-anhydro-N-acetyl-beta-muramic acid catabolic process"/>
    <property type="evidence" value="ECO:0007669"/>
    <property type="project" value="UniProtKB-UniRule"/>
</dbReference>
<dbReference type="GO" id="GO:0006040">
    <property type="term" value="P:amino sugar metabolic process"/>
    <property type="evidence" value="ECO:0007669"/>
    <property type="project" value="InterPro"/>
</dbReference>
<dbReference type="GO" id="GO:0009254">
    <property type="term" value="P:peptidoglycan turnover"/>
    <property type="evidence" value="ECO:0007669"/>
    <property type="project" value="UniProtKB-UniRule"/>
</dbReference>
<dbReference type="Gene3D" id="3.30.420.40">
    <property type="match status" value="2"/>
</dbReference>
<dbReference type="HAMAP" id="MF_01270">
    <property type="entry name" value="AnhMurNAc_kinase"/>
    <property type="match status" value="1"/>
</dbReference>
<dbReference type="InterPro" id="IPR005338">
    <property type="entry name" value="Anhydro_N_Ac-Mur_kinase"/>
</dbReference>
<dbReference type="InterPro" id="IPR043129">
    <property type="entry name" value="ATPase_NBD"/>
</dbReference>
<dbReference type="NCBIfam" id="NF007141">
    <property type="entry name" value="PRK09585.1-5"/>
    <property type="match status" value="1"/>
</dbReference>
<dbReference type="PANTHER" id="PTHR30605">
    <property type="entry name" value="ANHYDRO-N-ACETYLMURAMIC ACID KINASE"/>
    <property type="match status" value="1"/>
</dbReference>
<dbReference type="PANTHER" id="PTHR30605:SF0">
    <property type="entry name" value="ANHYDRO-N-ACETYLMURAMIC ACID KINASE"/>
    <property type="match status" value="1"/>
</dbReference>
<dbReference type="Pfam" id="PF03702">
    <property type="entry name" value="AnmK"/>
    <property type="match status" value="1"/>
</dbReference>
<dbReference type="SUPFAM" id="SSF53067">
    <property type="entry name" value="Actin-like ATPase domain"/>
    <property type="match status" value="1"/>
</dbReference>
<keyword id="KW-0067">ATP-binding</keyword>
<keyword id="KW-0119">Carbohydrate metabolism</keyword>
<keyword id="KW-0418">Kinase</keyword>
<keyword id="KW-0547">Nucleotide-binding</keyword>
<keyword id="KW-1185">Reference proteome</keyword>
<keyword id="KW-0808">Transferase</keyword>
<evidence type="ECO:0000255" key="1">
    <source>
        <dbReference type="HAMAP-Rule" id="MF_01270"/>
    </source>
</evidence>
<evidence type="ECO:0000256" key="2">
    <source>
        <dbReference type="SAM" id="MobiDB-lite"/>
    </source>
</evidence>
<evidence type="ECO:0000305" key="3"/>
<protein>
    <recommendedName>
        <fullName evidence="1">Anhydro-N-acetylmuramic acid kinase 1</fullName>
        <ecNumber evidence="1">2.7.1.170</ecNumber>
    </recommendedName>
    <alternativeName>
        <fullName evidence="1">AnhMurNAc kinase 1</fullName>
    </alternativeName>
</protein>
<accession>Q28RF2</accession>
<proteinExistence type="inferred from homology"/>
<reference key="1">
    <citation type="submission" date="2006-02" db="EMBL/GenBank/DDBJ databases">
        <title>Complete sequence of chromosome of Jannaschia sp. CCS1.</title>
        <authorList>
            <consortium name="US DOE Joint Genome Institute"/>
            <person name="Copeland A."/>
            <person name="Lucas S."/>
            <person name="Lapidus A."/>
            <person name="Barry K."/>
            <person name="Detter J.C."/>
            <person name="Glavina del Rio T."/>
            <person name="Hammon N."/>
            <person name="Israni S."/>
            <person name="Pitluck S."/>
            <person name="Brettin T."/>
            <person name="Bruce D."/>
            <person name="Han C."/>
            <person name="Tapia R."/>
            <person name="Gilna P."/>
            <person name="Chertkov O."/>
            <person name="Saunders E."/>
            <person name="Schmutz J."/>
            <person name="Larimer F."/>
            <person name="Land M."/>
            <person name="Kyrpides N."/>
            <person name="Lykidis A."/>
            <person name="Moran M.A."/>
            <person name="Belas R."/>
            <person name="Ye W."/>
            <person name="Buchan A."/>
            <person name="Gonzalez J.M."/>
            <person name="Schell M.A."/>
            <person name="Richardson P."/>
        </authorList>
    </citation>
    <scope>NUCLEOTIDE SEQUENCE [LARGE SCALE GENOMIC DNA]</scope>
    <source>
        <strain>CCS1</strain>
    </source>
</reference>